<proteinExistence type="inferred from homology"/>
<protein>
    <recommendedName>
        <fullName evidence="1">Probable GTP-binding protein EngB</fullName>
    </recommendedName>
</protein>
<reference key="1">
    <citation type="journal article" date="2004" name="Proc. Natl. Acad. Sci. U.S.A.">
        <title>Insights into the evolution of Yersinia pestis through whole-genome comparison with Yersinia pseudotuberculosis.</title>
        <authorList>
            <person name="Chain P.S.G."/>
            <person name="Carniel E."/>
            <person name="Larimer F.W."/>
            <person name="Lamerdin J."/>
            <person name="Stoutland P.O."/>
            <person name="Regala W.M."/>
            <person name="Georgescu A.M."/>
            <person name="Vergez L.M."/>
            <person name="Land M.L."/>
            <person name="Motin V.L."/>
            <person name="Brubaker R.R."/>
            <person name="Fowler J."/>
            <person name="Hinnebusch J."/>
            <person name="Marceau M."/>
            <person name="Medigue C."/>
            <person name="Simonet M."/>
            <person name="Chenal-Francisque V."/>
            <person name="Souza B."/>
            <person name="Dacheux D."/>
            <person name="Elliott J.M."/>
            <person name="Derbise A."/>
            <person name="Hauser L.J."/>
            <person name="Garcia E."/>
        </authorList>
    </citation>
    <scope>NUCLEOTIDE SEQUENCE [LARGE SCALE GENOMIC DNA]</scope>
    <source>
        <strain>IP32953</strain>
    </source>
</reference>
<feature type="chain" id="PRO_0000266985" description="Probable GTP-binding protein EngB">
    <location>
        <begin position="1"/>
        <end position="216"/>
    </location>
</feature>
<feature type="domain" description="EngB-type G" evidence="1">
    <location>
        <begin position="27"/>
        <end position="201"/>
    </location>
</feature>
<feature type="binding site" evidence="1">
    <location>
        <begin position="35"/>
        <end position="42"/>
    </location>
    <ligand>
        <name>GTP</name>
        <dbReference type="ChEBI" id="CHEBI:37565"/>
    </ligand>
</feature>
<feature type="binding site" evidence="1">
    <location>
        <position position="42"/>
    </location>
    <ligand>
        <name>Mg(2+)</name>
        <dbReference type="ChEBI" id="CHEBI:18420"/>
    </ligand>
</feature>
<feature type="binding site" evidence="1">
    <location>
        <begin position="62"/>
        <end position="66"/>
    </location>
    <ligand>
        <name>GTP</name>
        <dbReference type="ChEBI" id="CHEBI:37565"/>
    </ligand>
</feature>
<feature type="binding site" evidence="1">
    <location>
        <position position="64"/>
    </location>
    <ligand>
        <name>Mg(2+)</name>
        <dbReference type="ChEBI" id="CHEBI:18420"/>
    </ligand>
</feature>
<feature type="binding site" evidence="1">
    <location>
        <begin position="80"/>
        <end position="83"/>
    </location>
    <ligand>
        <name>GTP</name>
        <dbReference type="ChEBI" id="CHEBI:37565"/>
    </ligand>
</feature>
<feature type="binding site" evidence="1">
    <location>
        <begin position="147"/>
        <end position="150"/>
    </location>
    <ligand>
        <name>GTP</name>
        <dbReference type="ChEBI" id="CHEBI:37565"/>
    </ligand>
</feature>
<feature type="binding site" evidence="1">
    <location>
        <begin position="180"/>
        <end position="182"/>
    </location>
    <ligand>
        <name>GTP</name>
        <dbReference type="ChEBI" id="CHEBI:37565"/>
    </ligand>
</feature>
<sequence>MTIRNYNYHMTHFVISAPDIRHLPRDEGIEVAFAGRSNAGKSSALNTLTNQKGLARTSKTPGRTQLINLFEVVDGVRLVDLPGYGYAEVPEEMKLKWQRALGEYLQKRNCLKGLVVLMDIRHPLKDLDQQMITWAVAVGTPVLLLLTKADKLASGARKAQLNLVREAIIPFMGDIQVEAFSSLKKIGVDKLREKLDTWFSEIPPEVMAEEFDGEGE</sequence>
<organism>
    <name type="scientific">Yersinia pseudotuberculosis serotype I (strain IP32953)</name>
    <dbReference type="NCBI Taxonomy" id="273123"/>
    <lineage>
        <taxon>Bacteria</taxon>
        <taxon>Pseudomonadati</taxon>
        <taxon>Pseudomonadota</taxon>
        <taxon>Gammaproteobacteria</taxon>
        <taxon>Enterobacterales</taxon>
        <taxon>Yersiniaceae</taxon>
        <taxon>Yersinia</taxon>
    </lineage>
</organism>
<comment type="function">
    <text evidence="1">Necessary for normal cell division and for the maintenance of normal septation.</text>
</comment>
<comment type="cofactor">
    <cofactor evidence="1">
        <name>Mg(2+)</name>
        <dbReference type="ChEBI" id="CHEBI:18420"/>
    </cofactor>
</comment>
<comment type="similarity">
    <text evidence="1">Belongs to the TRAFAC class TrmE-Era-EngA-EngB-Septin-like GTPase superfamily. EngB GTPase family.</text>
</comment>
<evidence type="ECO:0000255" key="1">
    <source>
        <dbReference type="HAMAP-Rule" id="MF_00321"/>
    </source>
</evidence>
<dbReference type="EMBL" id="BX936398">
    <property type="protein sequence ID" value="CAH19259.1"/>
    <property type="molecule type" value="Genomic_DNA"/>
</dbReference>
<dbReference type="SMR" id="Q66GG3"/>
<dbReference type="KEGG" id="ypo:BZ17_2576"/>
<dbReference type="KEGG" id="yps:YPTB0019"/>
<dbReference type="PATRIC" id="fig|273123.14.peg.2704"/>
<dbReference type="Proteomes" id="UP000001011">
    <property type="component" value="Chromosome"/>
</dbReference>
<dbReference type="GO" id="GO:0005829">
    <property type="term" value="C:cytosol"/>
    <property type="evidence" value="ECO:0007669"/>
    <property type="project" value="TreeGrafter"/>
</dbReference>
<dbReference type="GO" id="GO:0005525">
    <property type="term" value="F:GTP binding"/>
    <property type="evidence" value="ECO:0007669"/>
    <property type="project" value="UniProtKB-UniRule"/>
</dbReference>
<dbReference type="GO" id="GO:0046872">
    <property type="term" value="F:metal ion binding"/>
    <property type="evidence" value="ECO:0007669"/>
    <property type="project" value="UniProtKB-KW"/>
</dbReference>
<dbReference type="GO" id="GO:0000917">
    <property type="term" value="P:division septum assembly"/>
    <property type="evidence" value="ECO:0007669"/>
    <property type="project" value="UniProtKB-KW"/>
</dbReference>
<dbReference type="CDD" id="cd01876">
    <property type="entry name" value="YihA_EngB"/>
    <property type="match status" value="1"/>
</dbReference>
<dbReference type="FunFam" id="3.40.50.300:FF:000098">
    <property type="entry name" value="Probable GTP-binding protein EngB"/>
    <property type="match status" value="1"/>
</dbReference>
<dbReference type="Gene3D" id="3.40.50.300">
    <property type="entry name" value="P-loop containing nucleotide triphosphate hydrolases"/>
    <property type="match status" value="1"/>
</dbReference>
<dbReference type="HAMAP" id="MF_00321">
    <property type="entry name" value="GTPase_EngB"/>
    <property type="match status" value="1"/>
</dbReference>
<dbReference type="InterPro" id="IPR030393">
    <property type="entry name" value="G_ENGB_dom"/>
</dbReference>
<dbReference type="InterPro" id="IPR006073">
    <property type="entry name" value="GTP-bd"/>
</dbReference>
<dbReference type="InterPro" id="IPR019987">
    <property type="entry name" value="GTP-bd_ribosome_bio_YsxC"/>
</dbReference>
<dbReference type="InterPro" id="IPR027417">
    <property type="entry name" value="P-loop_NTPase"/>
</dbReference>
<dbReference type="NCBIfam" id="TIGR03598">
    <property type="entry name" value="GTPase_YsxC"/>
    <property type="match status" value="1"/>
</dbReference>
<dbReference type="PANTHER" id="PTHR11649:SF13">
    <property type="entry name" value="ENGB-TYPE G DOMAIN-CONTAINING PROTEIN"/>
    <property type="match status" value="1"/>
</dbReference>
<dbReference type="PANTHER" id="PTHR11649">
    <property type="entry name" value="MSS1/TRME-RELATED GTP-BINDING PROTEIN"/>
    <property type="match status" value="1"/>
</dbReference>
<dbReference type="Pfam" id="PF01926">
    <property type="entry name" value="MMR_HSR1"/>
    <property type="match status" value="1"/>
</dbReference>
<dbReference type="SUPFAM" id="SSF52540">
    <property type="entry name" value="P-loop containing nucleoside triphosphate hydrolases"/>
    <property type="match status" value="1"/>
</dbReference>
<dbReference type="PROSITE" id="PS51706">
    <property type="entry name" value="G_ENGB"/>
    <property type="match status" value="1"/>
</dbReference>
<keyword id="KW-0131">Cell cycle</keyword>
<keyword id="KW-0132">Cell division</keyword>
<keyword id="KW-0342">GTP-binding</keyword>
<keyword id="KW-0460">Magnesium</keyword>
<keyword id="KW-0479">Metal-binding</keyword>
<keyword id="KW-0547">Nucleotide-binding</keyword>
<keyword id="KW-0717">Septation</keyword>
<accession>Q66GG3</accession>
<name>ENGB_YERPS</name>
<gene>
    <name evidence="1" type="primary">engB</name>
    <name type="ordered locus">YPTB0019</name>
</gene>